<protein>
    <recommendedName>
        <fullName>Protein bdm homolog</fullName>
    </recommendedName>
</protein>
<keyword id="KW-1185">Reference proteome</keyword>
<sequence length="71" mass="7988">MFTYYQAENSTAEPALVNAIEQGLRAEHGVVTEDDILMELTKWVEASDNDILSDIYQQTINYVVSGQHPTL</sequence>
<gene>
    <name type="primary">bdm</name>
    <name type="ordered locus">Z2229</name>
    <name type="ordered locus">ECs2085</name>
</gene>
<comment type="sequence caution" evidence="1">
    <conflict type="erroneous initiation">
        <sequence resource="EMBL-CDS" id="AAG56288"/>
    </conflict>
    <text>Extended N-terminus.</text>
</comment>
<name>BDM_ECO57</name>
<evidence type="ECO:0000305" key="1"/>
<organism>
    <name type="scientific">Escherichia coli O157:H7</name>
    <dbReference type="NCBI Taxonomy" id="83334"/>
    <lineage>
        <taxon>Bacteria</taxon>
        <taxon>Pseudomonadati</taxon>
        <taxon>Pseudomonadota</taxon>
        <taxon>Gammaproteobacteria</taxon>
        <taxon>Enterobacterales</taxon>
        <taxon>Enterobacteriaceae</taxon>
        <taxon>Escherichia</taxon>
    </lineage>
</organism>
<reference key="1">
    <citation type="journal article" date="2001" name="Nature">
        <title>Genome sequence of enterohaemorrhagic Escherichia coli O157:H7.</title>
        <authorList>
            <person name="Perna N.T."/>
            <person name="Plunkett G. III"/>
            <person name="Burland V."/>
            <person name="Mau B."/>
            <person name="Glasner J.D."/>
            <person name="Rose D.J."/>
            <person name="Mayhew G.F."/>
            <person name="Evans P.S."/>
            <person name="Gregor J."/>
            <person name="Kirkpatrick H.A."/>
            <person name="Posfai G."/>
            <person name="Hackett J."/>
            <person name="Klink S."/>
            <person name="Boutin A."/>
            <person name="Shao Y."/>
            <person name="Miller L."/>
            <person name="Grotbeck E.J."/>
            <person name="Davis N.W."/>
            <person name="Lim A."/>
            <person name="Dimalanta E.T."/>
            <person name="Potamousis K."/>
            <person name="Apodaca J."/>
            <person name="Anantharaman T.S."/>
            <person name="Lin J."/>
            <person name="Yen G."/>
            <person name="Schwartz D.C."/>
            <person name="Welch R.A."/>
            <person name="Blattner F.R."/>
        </authorList>
    </citation>
    <scope>NUCLEOTIDE SEQUENCE [LARGE SCALE GENOMIC DNA]</scope>
    <source>
        <strain>O157:H7 / EDL933 / ATCC 700927 / EHEC</strain>
    </source>
</reference>
<reference key="2">
    <citation type="journal article" date="2001" name="DNA Res.">
        <title>Complete genome sequence of enterohemorrhagic Escherichia coli O157:H7 and genomic comparison with a laboratory strain K-12.</title>
        <authorList>
            <person name="Hayashi T."/>
            <person name="Makino K."/>
            <person name="Ohnishi M."/>
            <person name="Kurokawa K."/>
            <person name="Ishii K."/>
            <person name="Yokoyama K."/>
            <person name="Han C.-G."/>
            <person name="Ohtsubo E."/>
            <person name="Nakayama K."/>
            <person name="Murata T."/>
            <person name="Tanaka M."/>
            <person name="Tobe T."/>
            <person name="Iida T."/>
            <person name="Takami H."/>
            <person name="Honda T."/>
            <person name="Sasakawa C."/>
            <person name="Ogasawara N."/>
            <person name="Yasunaga T."/>
            <person name="Kuhara S."/>
            <person name="Shiba T."/>
            <person name="Hattori M."/>
            <person name="Shinagawa H."/>
        </authorList>
    </citation>
    <scope>NUCLEOTIDE SEQUENCE [LARGE SCALE GENOMIC DNA]</scope>
    <source>
        <strain>O157:H7 / Sakai / RIMD 0509952 / EHEC</strain>
    </source>
</reference>
<accession>P65640</accession>
<accession>Q8XAT7</accession>
<feature type="chain" id="PRO_0000064899" description="Protein bdm homolog">
    <location>
        <begin position="1"/>
        <end position="71"/>
    </location>
</feature>
<dbReference type="EMBL" id="AE005174">
    <property type="protein sequence ID" value="AAG56288.1"/>
    <property type="status" value="ALT_INIT"/>
    <property type="molecule type" value="Genomic_DNA"/>
</dbReference>
<dbReference type="EMBL" id="BA000007">
    <property type="protein sequence ID" value="BAB35508.2"/>
    <property type="molecule type" value="Genomic_DNA"/>
</dbReference>
<dbReference type="PIR" id="D85728">
    <property type="entry name" value="D85728"/>
</dbReference>
<dbReference type="PIR" id="E90889">
    <property type="entry name" value="E90889"/>
</dbReference>
<dbReference type="RefSeq" id="NP_310112.2">
    <property type="nucleotide sequence ID" value="NC_002695.1"/>
</dbReference>
<dbReference type="RefSeq" id="WP_000495766.1">
    <property type="nucleotide sequence ID" value="NZ_VOAI01000034.1"/>
</dbReference>
<dbReference type="SMR" id="P65640"/>
<dbReference type="STRING" id="155864.Z2229"/>
<dbReference type="GeneID" id="75171567"/>
<dbReference type="GeneID" id="917280"/>
<dbReference type="KEGG" id="ece:Z2229"/>
<dbReference type="KEGG" id="ecs:ECs_2085"/>
<dbReference type="PATRIC" id="fig|386585.9.peg.2190"/>
<dbReference type="eggNOG" id="ENOG5032SK6">
    <property type="taxonomic scope" value="Bacteria"/>
</dbReference>
<dbReference type="HOGENOM" id="CLU_186729_0_0_6"/>
<dbReference type="OMA" id="THYSANT"/>
<dbReference type="Proteomes" id="UP000000558">
    <property type="component" value="Chromosome"/>
</dbReference>
<dbReference type="Proteomes" id="UP000002519">
    <property type="component" value="Chromosome"/>
</dbReference>
<dbReference type="InterPro" id="IPR019625">
    <property type="entry name" value="Biofilm-dep_modulation_Bdm_put"/>
</dbReference>
<dbReference type="NCBIfam" id="NF008515">
    <property type="entry name" value="PRK11436.1"/>
    <property type="match status" value="1"/>
</dbReference>
<dbReference type="Pfam" id="PF10684">
    <property type="entry name" value="BDM"/>
    <property type="match status" value="1"/>
</dbReference>
<proteinExistence type="predicted"/>